<dbReference type="EC" id="2.7.7.60" evidence="1"/>
<dbReference type="EMBL" id="CP000142">
    <property type="protein sequence ID" value="ABA87366.1"/>
    <property type="molecule type" value="Genomic_DNA"/>
</dbReference>
<dbReference type="RefSeq" id="WP_011339755.1">
    <property type="nucleotide sequence ID" value="NC_007498.2"/>
</dbReference>
<dbReference type="SMR" id="Q3A8C6"/>
<dbReference type="STRING" id="338963.Pcar_0103"/>
<dbReference type="KEGG" id="pca:Pcar_0103"/>
<dbReference type="eggNOG" id="COG1211">
    <property type="taxonomic scope" value="Bacteria"/>
</dbReference>
<dbReference type="HOGENOM" id="CLU_061281_2_2_7"/>
<dbReference type="OrthoDB" id="9804336at2"/>
<dbReference type="UniPathway" id="UPA00056">
    <property type="reaction ID" value="UER00093"/>
</dbReference>
<dbReference type="Proteomes" id="UP000002534">
    <property type="component" value="Chromosome"/>
</dbReference>
<dbReference type="GO" id="GO:0050518">
    <property type="term" value="F:2-C-methyl-D-erythritol 4-phosphate cytidylyltransferase activity"/>
    <property type="evidence" value="ECO:0007669"/>
    <property type="project" value="UniProtKB-UniRule"/>
</dbReference>
<dbReference type="GO" id="GO:0019288">
    <property type="term" value="P:isopentenyl diphosphate biosynthetic process, methylerythritol 4-phosphate pathway"/>
    <property type="evidence" value="ECO:0007669"/>
    <property type="project" value="UniProtKB-UniRule"/>
</dbReference>
<dbReference type="CDD" id="cd02516">
    <property type="entry name" value="CDP-ME_synthetase"/>
    <property type="match status" value="1"/>
</dbReference>
<dbReference type="FunFam" id="3.90.550.10:FF:000003">
    <property type="entry name" value="2-C-methyl-D-erythritol 4-phosphate cytidylyltransferase"/>
    <property type="match status" value="1"/>
</dbReference>
<dbReference type="Gene3D" id="3.90.550.10">
    <property type="entry name" value="Spore Coat Polysaccharide Biosynthesis Protein SpsA, Chain A"/>
    <property type="match status" value="1"/>
</dbReference>
<dbReference type="HAMAP" id="MF_00108">
    <property type="entry name" value="IspD"/>
    <property type="match status" value="1"/>
</dbReference>
<dbReference type="InterPro" id="IPR001228">
    <property type="entry name" value="IspD"/>
</dbReference>
<dbReference type="InterPro" id="IPR034683">
    <property type="entry name" value="IspD/TarI"/>
</dbReference>
<dbReference type="InterPro" id="IPR050088">
    <property type="entry name" value="IspD/TarI_cytidylyltransf_bact"/>
</dbReference>
<dbReference type="InterPro" id="IPR018294">
    <property type="entry name" value="ISPD_synthase_CS"/>
</dbReference>
<dbReference type="InterPro" id="IPR029044">
    <property type="entry name" value="Nucleotide-diphossugar_trans"/>
</dbReference>
<dbReference type="NCBIfam" id="TIGR00453">
    <property type="entry name" value="ispD"/>
    <property type="match status" value="1"/>
</dbReference>
<dbReference type="PANTHER" id="PTHR32125">
    <property type="entry name" value="2-C-METHYL-D-ERYTHRITOL 4-PHOSPHATE CYTIDYLYLTRANSFERASE, CHLOROPLASTIC"/>
    <property type="match status" value="1"/>
</dbReference>
<dbReference type="PANTHER" id="PTHR32125:SF4">
    <property type="entry name" value="2-C-METHYL-D-ERYTHRITOL 4-PHOSPHATE CYTIDYLYLTRANSFERASE, CHLOROPLASTIC"/>
    <property type="match status" value="1"/>
</dbReference>
<dbReference type="Pfam" id="PF01128">
    <property type="entry name" value="IspD"/>
    <property type="match status" value="1"/>
</dbReference>
<dbReference type="SUPFAM" id="SSF53448">
    <property type="entry name" value="Nucleotide-diphospho-sugar transferases"/>
    <property type="match status" value="1"/>
</dbReference>
<dbReference type="PROSITE" id="PS01295">
    <property type="entry name" value="ISPD"/>
    <property type="match status" value="1"/>
</dbReference>
<keyword id="KW-0414">Isoprene biosynthesis</keyword>
<keyword id="KW-0548">Nucleotidyltransferase</keyword>
<keyword id="KW-1185">Reference proteome</keyword>
<keyword id="KW-0808">Transferase</keyword>
<gene>
    <name evidence="1" type="primary">ispD</name>
    <name type="ordered locus">Pcar_0103</name>
</gene>
<comment type="function">
    <text evidence="1">Catalyzes the formation of 4-diphosphocytidyl-2-C-methyl-D-erythritol from CTP and 2-C-methyl-D-erythritol 4-phosphate (MEP).</text>
</comment>
<comment type="catalytic activity">
    <reaction evidence="1">
        <text>2-C-methyl-D-erythritol 4-phosphate + CTP + H(+) = 4-CDP-2-C-methyl-D-erythritol + diphosphate</text>
        <dbReference type="Rhea" id="RHEA:13429"/>
        <dbReference type="ChEBI" id="CHEBI:15378"/>
        <dbReference type="ChEBI" id="CHEBI:33019"/>
        <dbReference type="ChEBI" id="CHEBI:37563"/>
        <dbReference type="ChEBI" id="CHEBI:57823"/>
        <dbReference type="ChEBI" id="CHEBI:58262"/>
        <dbReference type="EC" id="2.7.7.60"/>
    </reaction>
</comment>
<comment type="pathway">
    <text evidence="1">Isoprenoid biosynthesis; isopentenyl diphosphate biosynthesis via DXP pathway; isopentenyl diphosphate from 1-deoxy-D-xylulose 5-phosphate: step 2/6.</text>
</comment>
<comment type="similarity">
    <text evidence="1">Belongs to the IspD/TarI cytidylyltransferase family. IspD subfamily.</text>
</comment>
<feature type="chain" id="PRO_0000237803" description="2-C-methyl-D-erythritol 4-phosphate cytidylyltransferase">
    <location>
        <begin position="1"/>
        <end position="233"/>
    </location>
</feature>
<feature type="site" description="Transition state stabilizer" evidence="1">
    <location>
        <position position="15"/>
    </location>
</feature>
<feature type="site" description="Transition state stabilizer" evidence="1">
    <location>
        <position position="22"/>
    </location>
</feature>
<feature type="site" description="Positions MEP for the nucleophilic attack" evidence="1">
    <location>
        <position position="155"/>
    </location>
</feature>
<feature type="site" description="Positions MEP for the nucleophilic attack" evidence="1">
    <location>
        <position position="211"/>
    </location>
</feature>
<name>ISPD_SYNC1</name>
<accession>Q3A8C6</accession>
<organism>
    <name type="scientific">Syntrophotalea carbinolica (strain DSM 2380 / NBRC 103641 / GraBd1)</name>
    <name type="common">Pelobacter carbinolicus</name>
    <dbReference type="NCBI Taxonomy" id="338963"/>
    <lineage>
        <taxon>Bacteria</taxon>
        <taxon>Pseudomonadati</taxon>
        <taxon>Thermodesulfobacteriota</taxon>
        <taxon>Desulfuromonadia</taxon>
        <taxon>Desulfuromonadales</taxon>
        <taxon>Syntrophotaleaceae</taxon>
        <taxon>Syntrophotalea</taxon>
    </lineage>
</organism>
<reference key="1">
    <citation type="submission" date="2005-10" db="EMBL/GenBank/DDBJ databases">
        <title>Complete sequence of Pelobacter carbinolicus DSM 2380.</title>
        <authorList>
            <person name="Copeland A."/>
            <person name="Lucas S."/>
            <person name="Lapidus A."/>
            <person name="Barry K."/>
            <person name="Detter J.C."/>
            <person name="Glavina T."/>
            <person name="Hammon N."/>
            <person name="Israni S."/>
            <person name="Pitluck S."/>
            <person name="Chertkov O."/>
            <person name="Schmutz J."/>
            <person name="Larimer F."/>
            <person name="Land M."/>
            <person name="Kyrpides N."/>
            <person name="Ivanova N."/>
            <person name="Richardson P."/>
        </authorList>
    </citation>
    <scope>NUCLEOTIDE SEQUENCE [LARGE SCALE GENOMIC DNA]</scope>
    <source>
        <strain>DSM 2380 / NBRC 103641 / GraBd1</strain>
    </source>
</reference>
<sequence>MSVYVLIPAAGMGRRMGASVNKQYLPLGDRPVLSHTIALFDRHPGIDHIFVICPEAEFPLCRREVIDPYDFRKVRGLVAGGAERQDSVRNGLQACQAAEGDIVLIHDGARPLLPPALIEPTVAAAQQCGAAIVGVPVKDTIKLVTDGMIDSTPDRSLLWQAQTPQAFRFGLIRDAHAQALQQHHKGTDDASLIEWLGGRVAMIEGSYRNIKITTPEDLVLAQAFLDTPGDFQA</sequence>
<proteinExistence type="inferred from homology"/>
<protein>
    <recommendedName>
        <fullName evidence="1">2-C-methyl-D-erythritol 4-phosphate cytidylyltransferase</fullName>
        <ecNumber evidence="1">2.7.7.60</ecNumber>
    </recommendedName>
    <alternativeName>
        <fullName evidence="1">4-diphosphocytidyl-2C-methyl-D-erythritol synthase</fullName>
    </alternativeName>
    <alternativeName>
        <fullName evidence="1">MEP cytidylyltransferase</fullName>
        <shortName evidence="1">MCT</shortName>
    </alternativeName>
</protein>
<evidence type="ECO:0000255" key="1">
    <source>
        <dbReference type="HAMAP-Rule" id="MF_00108"/>
    </source>
</evidence>